<feature type="chain" id="PRO_1000049527" description="Glycerol-3-phosphate dehydrogenase [NAD(P)+]">
    <location>
        <begin position="1"/>
        <end position="341"/>
    </location>
</feature>
<feature type="active site" description="Proton acceptor" evidence="1">
    <location>
        <position position="195"/>
    </location>
</feature>
<feature type="binding site" evidence="1">
    <location>
        <position position="17"/>
    </location>
    <ligand>
        <name>NADPH</name>
        <dbReference type="ChEBI" id="CHEBI:57783"/>
    </ligand>
</feature>
<feature type="binding site" evidence="1">
    <location>
        <position position="18"/>
    </location>
    <ligand>
        <name>NADPH</name>
        <dbReference type="ChEBI" id="CHEBI:57783"/>
    </ligand>
</feature>
<feature type="binding site" evidence="1">
    <location>
        <position position="37"/>
    </location>
    <ligand>
        <name>NADPH</name>
        <dbReference type="ChEBI" id="CHEBI:57783"/>
    </ligand>
</feature>
<feature type="binding site" evidence="1">
    <location>
        <position position="112"/>
    </location>
    <ligand>
        <name>NADPH</name>
        <dbReference type="ChEBI" id="CHEBI:57783"/>
    </ligand>
</feature>
<feature type="binding site" evidence="1">
    <location>
        <position position="112"/>
    </location>
    <ligand>
        <name>sn-glycerol 3-phosphate</name>
        <dbReference type="ChEBI" id="CHEBI:57597"/>
    </ligand>
</feature>
<feature type="binding site" evidence="1">
    <location>
        <position position="140"/>
    </location>
    <ligand>
        <name>sn-glycerol 3-phosphate</name>
        <dbReference type="ChEBI" id="CHEBI:57597"/>
    </ligand>
</feature>
<feature type="binding site" evidence="1">
    <location>
        <position position="144"/>
    </location>
    <ligand>
        <name>NADPH</name>
        <dbReference type="ChEBI" id="CHEBI:57783"/>
    </ligand>
</feature>
<feature type="binding site" evidence="1">
    <location>
        <position position="195"/>
    </location>
    <ligand>
        <name>sn-glycerol 3-phosphate</name>
        <dbReference type="ChEBI" id="CHEBI:57597"/>
    </ligand>
</feature>
<feature type="binding site" evidence="1">
    <location>
        <position position="248"/>
    </location>
    <ligand>
        <name>sn-glycerol 3-phosphate</name>
        <dbReference type="ChEBI" id="CHEBI:57597"/>
    </ligand>
</feature>
<feature type="binding site" evidence="1">
    <location>
        <position position="258"/>
    </location>
    <ligand>
        <name>sn-glycerol 3-phosphate</name>
        <dbReference type="ChEBI" id="CHEBI:57597"/>
    </ligand>
</feature>
<feature type="binding site" evidence="1">
    <location>
        <position position="259"/>
    </location>
    <ligand>
        <name>NADPH</name>
        <dbReference type="ChEBI" id="CHEBI:57783"/>
    </ligand>
</feature>
<feature type="binding site" evidence="1">
    <location>
        <position position="259"/>
    </location>
    <ligand>
        <name>sn-glycerol 3-phosphate</name>
        <dbReference type="ChEBI" id="CHEBI:57597"/>
    </ligand>
</feature>
<feature type="binding site" evidence="1">
    <location>
        <position position="260"/>
    </location>
    <ligand>
        <name>sn-glycerol 3-phosphate</name>
        <dbReference type="ChEBI" id="CHEBI:57597"/>
    </ligand>
</feature>
<feature type="binding site" evidence="1">
    <location>
        <position position="283"/>
    </location>
    <ligand>
        <name>NADPH</name>
        <dbReference type="ChEBI" id="CHEBI:57783"/>
    </ligand>
</feature>
<feature type="binding site" evidence="1">
    <location>
        <position position="285"/>
    </location>
    <ligand>
        <name>NADPH</name>
        <dbReference type="ChEBI" id="CHEBI:57783"/>
    </ligand>
</feature>
<gene>
    <name evidence="1" type="primary">gpsA</name>
    <name type="ordered locus">MAV_4577</name>
</gene>
<protein>
    <recommendedName>
        <fullName evidence="1">Glycerol-3-phosphate dehydrogenase [NAD(P)+]</fullName>
        <ecNumber evidence="1">1.1.1.94</ecNumber>
    </recommendedName>
    <alternativeName>
        <fullName evidence="1">NAD(P)(+)-dependent glycerol-3-phosphate dehydrogenase</fullName>
    </alternativeName>
    <alternativeName>
        <fullName evidence="1">NAD(P)H-dependent dihydroxyacetone-phosphate reductase</fullName>
    </alternativeName>
</protein>
<proteinExistence type="inferred from homology"/>
<reference key="1">
    <citation type="submission" date="2006-10" db="EMBL/GenBank/DDBJ databases">
        <authorList>
            <person name="Fleischmann R.D."/>
            <person name="Dodson R.J."/>
            <person name="Haft D.H."/>
            <person name="Merkel J.S."/>
            <person name="Nelson W.C."/>
            <person name="Fraser C.M."/>
        </authorList>
    </citation>
    <scope>NUCLEOTIDE SEQUENCE [LARGE SCALE GENOMIC DNA]</scope>
    <source>
        <strain>104</strain>
    </source>
</reference>
<dbReference type="EC" id="1.1.1.94" evidence="1"/>
<dbReference type="EMBL" id="CP000479">
    <property type="protein sequence ID" value="ABK67034.1"/>
    <property type="molecule type" value="Genomic_DNA"/>
</dbReference>
<dbReference type="RefSeq" id="WP_011726136.1">
    <property type="nucleotide sequence ID" value="NC_008595.1"/>
</dbReference>
<dbReference type="SMR" id="A0QLB8"/>
<dbReference type="KEGG" id="mav:MAV_4577"/>
<dbReference type="HOGENOM" id="CLU_033449_0_2_11"/>
<dbReference type="UniPathway" id="UPA00940"/>
<dbReference type="Proteomes" id="UP000001574">
    <property type="component" value="Chromosome"/>
</dbReference>
<dbReference type="GO" id="GO:0005829">
    <property type="term" value="C:cytosol"/>
    <property type="evidence" value="ECO:0007669"/>
    <property type="project" value="TreeGrafter"/>
</dbReference>
<dbReference type="GO" id="GO:0047952">
    <property type="term" value="F:glycerol-3-phosphate dehydrogenase [NAD(P)+] activity"/>
    <property type="evidence" value="ECO:0007669"/>
    <property type="project" value="UniProtKB-UniRule"/>
</dbReference>
<dbReference type="GO" id="GO:0051287">
    <property type="term" value="F:NAD binding"/>
    <property type="evidence" value="ECO:0007669"/>
    <property type="project" value="InterPro"/>
</dbReference>
<dbReference type="GO" id="GO:0005975">
    <property type="term" value="P:carbohydrate metabolic process"/>
    <property type="evidence" value="ECO:0007669"/>
    <property type="project" value="InterPro"/>
</dbReference>
<dbReference type="GO" id="GO:0046167">
    <property type="term" value="P:glycerol-3-phosphate biosynthetic process"/>
    <property type="evidence" value="ECO:0007669"/>
    <property type="project" value="UniProtKB-UniRule"/>
</dbReference>
<dbReference type="GO" id="GO:0046168">
    <property type="term" value="P:glycerol-3-phosphate catabolic process"/>
    <property type="evidence" value="ECO:0007669"/>
    <property type="project" value="InterPro"/>
</dbReference>
<dbReference type="GO" id="GO:0006650">
    <property type="term" value="P:glycerophospholipid metabolic process"/>
    <property type="evidence" value="ECO:0007669"/>
    <property type="project" value="UniProtKB-UniRule"/>
</dbReference>
<dbReference type="GO" id="GO:0008654">
    <property type="term" value="P:phospholipid biosynthetic process"/>
    <property type="evidence" value="ECO:0007669"/>
    <property type="project" value="UniProtKB-KW"/>
</dbReference>
<dbReference type="FunFam" id="1.10.1040.10:FF:000001">
    <property type="entry name" value="Glycerol-3-phosphate dehydrogenase [NAD(P)+]"/>
    <property type="match status" value="1"/>
</dbReference>
<dbReference type="FunFam" id="3.40.50.720:FF:000384">
    <property type="entry name" value="Glycerol-3-phosphate dehydrogenase [NAD(P)+]"/>
    <property type="match status" value="1"/>
</dbReference>
<dbReference type="Gene3D" id="1.10.1040.10">
    <property type="entry name" value="N-(1-d-carboxylethyl)-l-norvaline Dehydrogenase, domain 2"/>
    <property type="match status" value="1"/>
</dbReference>
<dbReference type="Gene3D" id="3.40.50.720">
    <property type="entry name" value="NAD(P)-binding Rossmann-like Domain"/>
    <property type="match status" value="1"/>
</dbReference>
<dbReference type="HAMAP" id="MF_00394">
    <property type="entry name" value="NAD_Glyc3P_dehydrog"/>
    <property type="match status" value="1"/>
</dbReference>
<dbReference type="InterPro" id="IPR008927">
    <property type="entry name" value="6-PGluconate_DH-like_C_sf"/>
</dbReference>
<dbReference type="InterPro" id="IPR013328">
    <property type="entry name" value="6PGD_dom2"/>
</dbReference>
<dbReference type="InterPro" id="IPR006168">
    <property type="entry name" value="G3P_DH_NAD-dep"/>
</dbReference>
<dbReference type="InterPro" id="IPR006109">
    <property type="entry name" value="G3P_DH_NAD-dep_C"/>
</dbReference>
<dbReference type="InterPro" id="IPR011128">
    <property type="entry name" value="G3P_DH_NAD-dep_N"/>
</dbReference>
<dbReference type="InterPro" id="IPR036291">
    <property type="entry name" value="NAD(P)-bd_dom_sf"/>
</dbReference>
<dbReference type="NCBIfam" id="NF000940">
    <property type="entry name" value="PRK00094.1-2"/>
    <property type="match status" value="1"/>
</dbReference>
<dbReference type="NCBIfam" id="NF000942">
    <property type="entry name" value="PRK00094.1-4"/>
    <property type="match status" value="1"/>
</dbReference>
<dbReference type="NCBIfam" id="NF009098">
    <property type="entry name" value="PRK12439.1"/>
    <property type="match status" value="1"/>
</dbReference>
<dbReference type="PANTHER" id="PTHR11728">
    <property type="entry name" value="GLYCEROL-3-PHOSPHATE DEHYDROGENASE"/>
    <property type="match status" value="1"/>
</dbReference>
<dbReference type="PANTHER" id="PTHR11728:SF1">
    <property type="entry name" value="GLYCEROL-3-PHOSPHATE DEHYDROGENASE [NAD(+)] 2, CHLOROPLASTIC"/>
    <property type="match status" value="1"/>
</dbReference>
<dbReference type="Pfam" id="PF07479">
    <property type="entry name" value="NAD_Gly3P_dh_C"/>
    <property type="match status" value="1"/>
</dbReference>
<dbReference type="Pfam" id="PF01210">
    <property type="entry name" value="NAD_Gly3P_dh_N"/>
    <property type="match status" value="1"/>
</dbReference>
<dbReference type="PIRSF" id="PIRSF000114">
    <property type="entry name" value="Glycerol-3-P_dh"/>
    <property type="match status" value="1"/>
</dbReference>
<dbReference type="PRINTS" id="PR00077">
    <property type="entry name" value="GPDHDRGNASE"/>
</dbReference>
<dbReference type="SUPFAM" id="SSF48179">
    <property type="entry name" value="6-phosphogluconate dehydrogenase C-terminal domain-like"/>
    <property type="match status" value="1"/>
</dbReference>
<dbReference type="SUPFAM" id="SSF51735">
    <property type="entry name" value="NAD(P)-binding Rossmann-fold domains"/>
    <property type="match status" value="1"/>
</dbReference>
<dbReference type="PROSITE" id="PS00957">
    <property type="entry name" value="NAD_G3PDH"/>
    <property type="match status" value="1"/>
</dbReference>
<sequence>MAAQMREPKVVVLGGGSWGTTVASICARRGPTLQWVRSRETADDINENHRNSRYLGNDVVLSDTLRATTDFCEAANTADVVVMGVPSHGFRGVLTELARELRPWVPVVSLVKGLEQGTNMRMSQIVEEVLPGHPAGILAGPNIAREVAEGYAAAAVLAMPDQHLATRLSGLFRTRRFRVYTTDDVVGAEMAGALKNVFAIAVGMGYSLGIGENTRALVIARALREMTKLGVAMGGSPDTFPGLAGLGDLIVTCTSQRSRNRHVGEQLGAGKPIDEIIASMNQVAEGVKAASVIMEFANEFGLTMPIAREVDAVINHGSTVEQAYRGLIAEVPGHEVHGSGF</sequence>
<name>GPDA_MYCA1</name>
<evidence type="ECO:0000255" key="1">
    <source>
        <dbReference type="HAMAP-Rule" id="MF_00394"/>
    </source>
</evidence>
<organism>
    <name type="scientific">Mycobacterium avium (strain 104)</name>
    <dbReference type="NCBI Taxonomy" id="243243"/>
    <lineage>
        <taxon>Bacteria</taxon>
        <taxon>Bacillati</taxon>
        <taxon>Actinomycetota</taxon>
        <taxon>Actinomycetes</taxon>
        <taxon>Mycobacteriales</taxon>
        <taxon>Mycobacteriaceae</taxon>
        <taxon>Mycobacterium</taxon>
        <taxon>Mycobacterium avium complex (MAC)</taxon>
    </lineage>
</organism>
<accession>A0QLB8</accession>
<comment type="function">
    <text evidence="1">Catalyzes the reduction of the glycolytic intermediate dihydroxyacetone phosphate (DHAP) to sn-glycerol 3-phosphate (G3P), the key precursor for phospholipid synthesis.</text>
</comment>
<comment type="catalytic activity">
    <reaction evidence="1">
        <text>sn-glycerol 3-phosphate + NAD(+) = dihydroxyacetone phosphate + NADH + H(+)</text>
        <dbReference type="Rhea" id="RHEA:11092"/>
        <dbReference type="ChEBI" id="CHEBI:15378"/>
        <dbReference type="ChEBI" id="CHEBI:57540"/>
        <dbReference type="ChEBI" id="CHEBI:57597"/>
        <dbReference type="ChEBI" id="CHEBI:57642"/>
        <dbReference type="ChEBI" id="CHEBI:57945"/>
        <dbReference type="EC" id="1.1.1.94"/>
    </reaction>
    <physiologicalReaction direction="right-to-left" evidence="1">
        <dbReference type="Rhea" id="RHEA:11094"/>
    </physiologicalReaction>
</comment>
<comment type="catalytic activity">
    <reaction evidence="1">
        <text>sn-glycerol 3-phosphate + NADP(+) = dihydroxyacetone phosphate + NADPH + H(+)</text>
        <dbReference type="Rhea" id="RHEA:11096"/>
        <dbReference type="ChEBI" id="CHEBI:15378"/>
        <dbReference type="ChEBI" id="CHEBI:57597"/>
        <dbReference type="ChEBI" id="CHEBI:57642"/>
        <dbReference type="ChEBI" id="CHEBI:57783"/>
        <dbReference type="ChEBI" id="CHEBI:58349"/>
        <dbReference type="EC" id="1.1.1.94"/>
    </reaction>
    <physiologicalReaction direction="right-to-left" evidence="1">
        <dbReference type="Rhea" id="RHEA:11098"/>
    </physiologicalReaction>
</comment>
<comment type="pathway">
    <text evidence="1">Membrane lipid metabolism; glycerophospholipid metabolism.</text>
</comment>
<comment type="subcellular location">
    <subcellularLocation>
        <location evidence="1">Cytoplasm</location>
    </subcellularLocation>
</comment>
<comment type="similarity">
    <text evidence="1">Belongs to the NAD-dependent glycerol-3-phosphate dehydrogenase family.</text>
</comment>
<keyword id="KW-0963">Cytoplasm</keyword>
<keyword id="KW-0444">Lipid biosynthesis</keyword>
<keyword id="KW-0443">Lipid metabolism</keyword>
<keyword id="KW-0520">NAD</keyword>
<keyword id="KW-0521">NADP</keyword>
<keyword id="KW-0547">Nucleotide-binding</keyword>
<keyword id="KW-0560">Oxidoreductase</keyword>
<keyword id="KW-0594">Phospholipid biosynthesis</keyword>
<keyword id="KW-1208">Phospholipid metabolism</keyword>